<organism>
    <name type="scientific">Rhizobium etli (strain ATCC 51251 / DSM 11541 / JCM 21823 / NBRC 15573 / CFN 42)</name>
    <dbReference type="NCBI Taxonomy" id="347834"/>
    <lineage>
        <taxon>Bacteria</taxon>
        <taxon>Pseudomonadati</taxon>
        <taxon>Pseudomonadota</taxon>
        <taxon>Alphaproteobacteria</taxon>
        <taxon>Hyphomicrobiales</taxon>
        <taxon>Rhizobiaceae</taxon>
        <taxon>Rhizobium/Agrobacterium group</taxon>
        <taxon>Rhizobium</taxon>
    </lineage>
</organism>
<comment type="function">
    <text evidence="1">Required for maturation of urease via the functional incorporation of the urease nickel metallocenter.</text>
</comment>
<comment type="subunit">
    <text evidence="1">UreD, UreF and UreG form a complex that acts as a GTP-hydrolysis-dependent molecular chaperone, activating the urease apoprotein by helping to assemble the nickel containing metallocenter of UreC. The UreE protein probably delivers the nickel.</text>
</comment>
<comment type="subcellular location">
    <subcellularLocation>
        <location evidence="1">Cytoplasm</location>
    </subcellularLocation>
</comment>
<comment type="similarity">
    <text evidence="1">Belongs to the UreD family.</text>
</comment>
<comment type="sequence caution" evidence="2">
    <conflict type="erroneous initiation">
        <sequence resource="EMBL-CDS" id="ABC92075"/>
    </conflict>
</comment>
<feature type="chain" id="PRO_0000340501" description="Urease accessory protein UreD">
    <location>
        <begin position="1"/>
        <end position="273"/>
    </location>
</feature>
<accession>Q2K511</accession>
<dbReference type="EMBL" id="CP000133">
    <property type="protein sequence ID" value="ABC92075.1"/>
    <property type="status" value="ALT_INIT"/>
    <property type="molecule type" value="Genomic_DNA"/>
</dbReference>
<dbReference type="RefSeq" id="WP_042118949.1">
    <property type="nucleotide sequence ID" value="NC_007761.1"/>
</dbReference>
<dbReference type="SMR" id="Q2K511"/>
<dbReference type="KEGG" id="ret:RHE_CH03311"/>
<dbReference type="eggNOG" id="COG0829">
    <property type="taxonomic scope" value="Bacteria"/>
</dbReference>
<dbReference type="HOGENOM" id="CLU_056339_2_0_5"/>
<dbReference type="OrthoDB" id="9798842at2"/>
<dbReference type="Proteomes" id="UP000001936">
    <property type="component" value="Chromosome"/>
</dbReference>
<dbReference type="GO" id="GO:0005737">
    <property type="term" value="C:cytoplasm"/>
    <property type="evidence" value="ECO:0007669"/>
    <property type="project" value="UniProtKB-SubCell"/>
</dbReference>
<dbReference type="GO" id="GO:0016151">
    <property type="term" value="F:nickel cation binding"/>
    <property type="evidence" value="ECO:0007669"/>
    <property type="project" value="UniProtKB-UniRule"/>
</dbReference>
<dbReference type="HAMAP" id="MF_01384">
    <property type="entry name" value="UreD"/>
    <property type="match status" value="1"/>
</dbReference>
<dbReference type="InterPro" id="IPR002669">
    <property type="entry name" value="UreD"/>
</dbReference>
<dbReference type="PANTHER" id="PTHR33643">
    <property type="entry name" value="UREASE ACCESSORY PROTEIN D"/>
    <property type="match status" value="1"/>
</dbReference>
<dbReference type="PANTHER" id="PTHR33643:SF1">
    <property type="entry name" value="UREASE ACCESSORY PROTEIN D"/>
    <property type="match status" value="1"/>
</dbReference>
<dbReference type="Pfam" id="PF01774">
    <property type="entry name" value="UreD"/>
    <property type="match status" value="1"/>
</dbReference>
<gene>
    <name evidence="1" type="primary">ureD</name>
    <name type="ordered locus">RHE_CH03311</name>
</gene>
<sequence length="273" mass="29340">MTIVATATRPQRAEGRGHLAAKLLDGRTRIRELYQEGAAKIRLPNTFDASMEAVIINTAGGLTGGDRMDWSVVAGAGTKIDVTTQACEKIYKASAGVAEVTTRIEAGAGARVDWLPQETILFDRAALFRRLDVDLDESAEFLAVEAVLLGRKAMGETVDTGLFRDRWRIRRSGRLIHAEELRFSEGVAALSARQAVLGGQVAFATLLYAGPLAEAYLGRVRSLLEGAMGGASAWGDKLVVRLAAADGFTLRKILIPVISVLRNGAPVPKVWNL</sequence>
<evidence type="ECO:0000255" key="1">
    <source>
        <dbReference type="HAMAP-Rule" id="MF_01384"/>
    </source>
</evidence>
<evidence type="ECO:0000305" key="2"/>
<reference key="1">
    <citation type="journal article" date="2006" name="Proc. Natl. Acad. Sci. U.S.A.">
        <title>The partitioned Rhizobium etli genome: genetic and metabolic redundancy in seven interacting replicons.</title>
        <authorList>
            <person name="Gonzalez V."/>
            <person name="Santamaria R.I."/>
            <person name="Bustos P."/>
            <person name="Hernandez-Gonzalez I."/>
            <person name="Medrano-Soto A."/>
            <person name="Moreno-Hagelsieb G."/>
            <person name="Janga S.C."/>
            <person name="Ramirez M.A."/>
            <person name="Jimenez-Jacinto V."/>
            <person name="Collado-Vides J."/>
            <person name="Davila G."/>
        </authorList>
    </citation>
    <scope>NUCLEOTIDE SEQUENCE [LARGE SCALE GENOMIC DNA]</scope>
    <source>
        <strain>ATCC 51251 / DSM 11541 / JCM 21823 / NBRC 15573 / CFN 42</strain>
    </source>
</reference>
<keyword id="KW-0143">Chaperone</keyword>
<keyword id="KW-0963">Cytoplasm</keyword>
<keyword id="KW-0996">Nickel insertion</keyword>
<keyword id="KW-1185">Reference proteome</keyword>
<protein>
    <recommendedName>
        <fullName evidence="1">Urease accessory protein UreD</fullName>
    </recommendedName>
</protein>
<name>URED_RHIEC</name>
<proteinExistence type="inferred from homology"/>